<sequence length="406" mass="45282">MLRYPYFYRTYNRLFSHFVDSGASNLDVCPHTIHTAVALHTESKAVEGTALCGPQKVYSSEEKELEAMAKLHIPVMVDQVVHCLAPQKGQVFLDMTFGSGGHTRAILQKEPDVMVYALDRDPVAYAIAEQLSRLYPTQIQALLGQFSQAEALLMKAGVQPGTIDGILMDLGCSSMQLDAPERGFSLRKDGPLDMRMDGDRYPDTPTASDVVNALDQQALASILRAYGEEKHAKKIASAIIQARSTYPISRTQQLASIVAGAFPPSAVYARKDLLQRSTHIATKTFQALRIFVNNELNELYAGLRTAEKFLKTGGRLVALSFHSLEDRIVKRFLLGISMTERFNLSIRQKVKQTSQLDSDQETEERHSVRAPLKWELIHKKVLTPEDQDVQDNPRGRSAKLRAAIKL</sequence>
<gene>
    <name evidence="5" type="primary">Mettl15</name>
    <name type="synonym">Mett5d1</name>
</gene>
<protein>
    <recommendedName>
        <fullName>12S rRNA N(4)-cytidine methyltransferase METTL15</fullName>
        <shortName>12S rRNA m4C methyltransferase</shortName>
        <ecNumber>2.1.1.-</ecNumber>
    </recommendedName>
    <alternativeName>
        <fullName>Methyltransferase 5 domain-containing protein 1</fullName>
    </alternativeName>
    <alternativeName>
        <fullName>Methyltransferase-like protein 15</fullName>
    </alternativeName>
</protein>
<accession>Q9DCL4</accession>
<accession>Q3KQI4</accession>
<organism>
    <name type="scientific">Mus musculus</name>
    <name type="common">Mouse</name>
    <dbReference type="NCBI Taxonomy" id="10090"/>
    <lineage>
        <taxon>Eukaryota</taxon>
        <taxon>Metazoa</taxon>
        <taxon>Chordata</taxon>
        <taxon>Craniata</taxon>
        <taxon>Vertebrata</taxon>
        <taxon>Euteleostomi</taxon>
        <taxon>Mammalia</taxon>
        <taxon>Eutheria</taxon>
        <taxon>Euarchontoglires</taxon>
        <taxon>Glires</taxon>
        <taxon>Rodentia</taxon>
        <taxon>Myomorpha</taxon>
        <taxon>Muroidea</taxon>
        <taxon>Muridae</taxon>
        <taxon>Murinae</taxon>
        <taxon>Mus</taxon>
        <taxon>Mus</taxon>
    </lineage>
</organism>
<proteinExistence type="evidence at protein level"/>
<name>MET15_MOUSE</name>
<feature type="transit peptide" description="Mitochondrion" evidence="3">
    <location>
        <begin position="1"/>
        <end position="22"/>
    </location>
</feature>
<feature type="chain" id="PRO_0000308333" description="12S rRNA N(4)-cytidine methyltransferase METTL15">
    <location>
        <begin position="23"/>
        <end position="406"/>
    </location>
</feature>
<feature type="binding site" evidence="2">
    <location>
        <begin position="100"/>
        <end position="102"/>
    </location>
    <ligand>
        <name>S-adenosyl-L-methionine</name>
        <dbReference type="ChEBI" id="CHEBI:59789"/>
    </ligand>
</feature>
<feature type="binding site" evidence="2">
    <location>
        <position position="119"/>
    </location>
    <ligand>
        <name>S-adenosyl-L-methionine</name>
        <dbReference type="ChEBI" id="CHEBI:59789"/>
    </ligand>
</feature>
<feature type="binding site" evidence="2">
    <location>
        <position position="146"/>
    </location>
    <ligand>
        <name>S-adenosyl-L-methionine</name>
        <dbReference type="ChEBI" id="CHEBI:59789"/>
    </ligand>
</feature>
<feature type="binding site" evidence="2">
    <location>
        <position position="169"/>
    </location>
    <ligand>
        <name>S-adenosyl-L-methionine</name>
        <dbReference type="ChEBI" id="CHEBI:59789"/>
    </ligand>
</feature>
<feature type="binding site" evidence="2">
    <location>
        <position position="176"/>
    </location>
    <ligand>
        <name>S-adenosyl-L-methionine</name>
        <dbReference type="ChEBI" id="CHEBI:59789"/>
    </ligand>
</feature>
<feature type="modified residue" description="Phosphoserine" evidence="1">
    <location>
        <position position="358"/>
    </location>
</feature>
<feature type="sequence conflict" description="In Ref. 3; AAI06187." evidence="4" ref="3">
    <original>S</original>
    <variation>P</variation>
    <location>
        <position position="173"/>
    </location>
</feature>
<dbReference type="EC" id="2.1.1.-"/>
<dbReference type="EMBL" id="AK002682">
    <property type="protein sequence ID" value="BAB22281.2"/>
    <property type="molecule type" value="mRNA"/>
</dbReference>
<dbReference type="EMBL" id="AL691430">
    <property type="status" value="NOT_ANNOTATED_CDS"/>
    <property type="molecule type" value="Genomic_DNA"/>
</dbReference>
<dbReference type="EMBL" id="BX813309">
    <property type="status" value="NOT_ANNOTATED_CDS"/>
    <property type="molecule type" value="Genomic_DNA"/>
</dbReference>
<dbReference type="EMBL" id="BX813328">
    <property type="status" value="NOT_ANNOTATED_CDS"/>
    <property type="molecule type" value="Genomic_DNA"/>
</dbReference>
<dbReference type="EMBL" id="BC106186">
    <property type="protein sequence ID" value="AAI06187.1"/>
    <property type="molecule type" value="mRNA"/>
</dbReference>
<dbReference type="EMBL" id="BC115926">
    <property type="protein sequence ID" value="AAI15927.1"/>
    <property type="molecule type" value="mRNA"/>
</dbReference>
<dbReference type="EMBL" id="BC117549">
    <property type="protein sequence ID" value="AAI17550.1"/>
    <property type="molecule type" value="mRNA"/>
</dbReference>
<dbReference type="CCDS" id="CCDS16506.1"/>
<dbReference type="RefSeq" id="NP_001405755.1">
    <property type="nucleotide sequence ID" value="NM_001418826.1"/>
</dbReference>
<dbReference type="RefSeq" id="NP_001405756.1">
    <property type="nucleotide sequence ID" value="NM_001418827.1"/>
</dbReference>
<dbReference type="RefSeq" id="NP_001405757.1">
    <property type="nucleotide sequence ID" value="NM_001418828.1"/>
</dbReference>
<dbReference type="RefSeq" id="NP_084066.2">
    <property type="nucleotide sequence ID" value="NM_029790.3"/>
</dbReference>
<dbReference type="RefSeq" id="XP_006500441.1">
    <property type="nucleotide sequence ID" value="XM_006500378.1"/>
</dbReference>
<dbReference type="RefSeq" id="XP_006500442.1">
    <property type="nucleotide sequence ID" value="XM_006500379.3"/>
</dbReference>
<dbReference type="PDB" id="7PNV">
    <property type="method" value="EM"/>
    <property type="resolution" value="3.06 A"/>
    <property type="chains" value="b=1-406"/>
</dbReference>
<dbReference type="PDBsum" id="7PNV"/>
<dbReference type="EMDB" id="EMD-13553"/>
<dbReference type="SMR" id="Q9DCL4"/>
<dbReference type="FunCoup" id="Q9DCL4">
    <property type="interactions" value="1540"/>
</dbReference>
<dbReference type="STRING" id="10090.ENSMUSP00000080337"/>
<dbReference type="iPTMnet" id="Q9DCL4"/>
<dbReference type="PhosphoSitePlus" id="Q9DCL4"/>
<dbReference type="PaxDb" id="10090-ENSMUSP00000080337"/>
<dbReference type="PeptideAtlas" id="Q9DCL4"/>
<dbReference type="ProteomicsDB" id="295936"/>
<dbReference type="Pumba" id="Q9DCL4"/>
<dbReference type="Antibodypedia" id="25483">
    <property type="antibodies" value="40 antibodies from 14 providers"/>
</dbReference>
<dbReference type="DNASU" id="76894"/>
<dbReference type="Ensembl" id="ENSMUST00000081631.10">
    <property type="protein sequence ID" value="ENSMUSP00000080337.4"/>
    <property type="gene ID" value="ENSMUSG00000057234.10"/>
</dbReference>
<dbReference type="GeneID" id="76894"/>
<dbReference type="KEGG" id="mmu:76894"/>
<dbReference type="UCSC" id="uc008llv.1">
    <property type="organism name" value="mouse"/>
</dbReference>
<dbReference type="AGR" id="MGI:1924144"/>
<dbReference type="CTD" id="196074"/>
<dbReference type="MGI" id="MGI:1924144">
    <property type="gene designation" value="Mettl15"/>
</dbReference>
<dbReference type="VEuPathDB" id="HostDB:ENSMUSG00000057234"/>
<dbReference type="eggNOG" id="KOG2782">
    <property type="taxonomic scope" value="Eukaryota"/>
</dbReference>
<dbReference type="GeneTree" id="ENSGT00390000014756"/>
<dbReference type="HOGENOM" id="CLU_038422_1_0_1"/>
<dbReference type="InParanoid" id="Q9DCL4"/>
<dbReference type="OMA" id="NPAKRTF"/>
<dbReference type="OrthoDB" id="16290at2759"/>
<dbReference type="PhylomeDB" id="Q9DCL4"/>
<dbReference type="TreeFam" id="TF106425"/>
<dbReference type="BioGRID-ORCS" id="76894">
    <property type="hits" value="2 hits in 78 CRISPR screens"/>
</dbReference>
<dbReference type="ChiTaRS" id="Mettl15">
    <property type="organism name" value="mouse"/>
</dbReference>
<dbReference type="PRO" id="PR:Q9DCL4"/>
<dbReference type="Proteomes" id="UP000000589">
    <property type="component" value="Chromosome 2"/>
</dbReference>
<dbReference type="RNAct" id="Q9DCL4">
    <property type="molecule type" value="protein"/>
</dbReference>
<dbReference type="Bgee" id="ENSMUSG00000057234">
    <property type="expression patterns" value="Expressed in pineal body and 224 other cell types or tissues"/>
</dbReference>
<dbReference type="ExpressionAtlas" id="Q9DCL4">
    <property type="expression patterns" value="baseline and differential"/>
</dbReference>
<dbReference type="GO" id="GO:0005759">
    <property type="term" value="C:mitochondrial matrix"/>
    <property type="evidence" value="ECO:0007669"/>
    <property type="project" value="UniProtKB-SubCell"/>
</dbReference>
<dbReference type="GO" id="GO:0071424">
    <property type="term" value="F:rRNA (cytosine-N4-)-methyltransferase activity"/>
    <property type="evidence" value="ECO:0007669"/>
    <property type="project" value="Ensembl"/>
</dbReference>
<dbReference type="GO" id="GO:0070475">
    <property type="term" value="P:rRNA base methylation"/>
    <property type="evidence" value="ECO:0007669"/>
    <property type="project" value="Ensembl"/>
</dbReference>
<dbReference type="FunFam" id="1.10.150.170:FF:000002">
    <property type="entry name" value="Probable methyltransferase-like protein 15"/>
    <property type="match status" value="1"/>
</dbReference>
<dbReference type="Gene3D" id="1.10.150.170">
    <property type="entry name" value="Putative methyltransferase TM0872, insert domain"/>
    <property type="match status" value="1"/>
</dbReference>
<dbReference type="Gene3D" id="3.40.50.150">
    <property type="entry name" value="Vaccinia Virus protein VP39"/>
    <property type="match status" value="1"/>
</dbReference>
<dbReference type="HAMAP" id="MF_01007">
    <property type="entry name" value="16SrRNA_methyltr_H"/>
    <property type="match status" value="1"/>
</dbReference>
<dbReference type="InterPro" id="IPR002903">
    <property type="entry name" value="RsmH"/>
</dbReference>
<dbReference type="InterPro" id="IPR023397">
    <property type="entry name" value="SAM-dep_MeTrfase_MraW_recog"/>
</dbReference>
<dbReference type="InterPro" id="IPR029063">
    <property type="entry name" value="SAM-dependent_MTases_sf"/>
</dbReference>
<dbReference type="NCBIfam" id="TIGR00006">
    <property type="entry name" value="16S rRNA (cytosine(1402)-N(4))-methyltransferase RsmH"/>
    <property type="match status" value="1"/>
</dbReference>
<dbReference type="PANTHER" id="PTHR11265:SF0">
    <property type="entry name" value="12S RRNA N4-METHYLCYTIDINE METHYLTRANSFERASE"/>
    <property type="match status" value="1"/>
</dbReference>
<dbReference type="PANTHER" id="PTHR11265">
    <property type="entry name" value="S-ADENOSYL-METHYLTRANSFERASE MRAW"/>
    <property type="match status" value="1"/>
</dbReference>
<dbReference type="Pfam" id="PF01795">
    <property type="entry name" value="Methyltransf_5"/>
    <property type="match status" value="1"/>
</dbReference>
<dbReference type="SUPFAM" id="SSF81799">
    <property type="entry name" value="Putative methyltransferase TM0872, insert domain"/>
    <property type="match status" value="1"/>
</dbReference>
<dbReference type="SUPFAM" id="SSF53335">
    <property type="entry name" value="S-adenosyl-L-methionine-dependent methyltransferases"/>
    <property type="match status" value="1"/>
</dbReference>
<evidence type="ECO:0000250" key="1">
    <source>
        <dbReference type="UniProtKB" id="A6NJ78"/>
    </source>
</evidence>
<evidence type="ECO:0000250" key="2">
    <source>
        <dbReference type="UniProtKB" id="Q9WZX6"/>
    </source>
</evidence>
<evidence type="ECO:0000255" key="3"/>
<evidence type="ECO:0000305" key="4"/>
<evidence type="ECO:0000312" key="5">
    <source>
        <dbReference type="MGI" id="MGI:1924144"/>
    </source>
</evidence>
<reference key="1">
    <citation type="journal article" date="2005" name="Science">
        <title>The transcriptional landscape of the mammalian genome.</title>
        <authorList>
            <person name="Carninci P."/>
            <person name="Kasukawa T."/>
            <person name="Katayama S."/>
            <person name="Gough J."/>
            <person name="Frith M.C."/>
            <person name="Maeda N."/>
            <person name="Oyama R."/>
            <person name="Ravasi T."/>
            <person name="Lenhard B."/>
            <person name="Wells C."/>
            <person name="Kodzius R."/>
            <person name="Shimokawa K."/>
            <person name="Bajic V.B."/>
            <person name="Brenner S.E."/>
            <person name="Batalov S."/>
            <person name="Forrest A.R."/>
            <person name="Zavolan M."/>
            <person name="Davis M.J."/>
            <person name="Wilming L.G."/>
            <person name="Aidinis V."/>
            <person name="Allen J.E."/>
            <person name="Ambesi-Impiombato A."/>
            <person name="Apweiler R."/>
            <person name="Aturaliya R.N."/>
            <person name="Bailey T.L."/>
            <person name="Bansal M."/>
            <person name="Baxter L."/>
            <person name="Beisel K.W."/>
            <person name="Bersano T."/>
            <person name="Bono H."/>
            <person name="Chalk A.M."/>
            <person name="Chiu K.P."/>
            <person name="Choudhary V."/>
            <person name="Christoffels A."/>
            <person name="Clutterbuck D.R."/>
            <person name="Crowe M.L."/>
            <person name="Dalla E."/>
            <person name="Dalrymple B.P."/>
            <person name="de Bono B."/>
            <person name="Della Gatta G."/>
            <person name="di Bernardo D."/>
            <person name="Down T."/>
            <person name="Engstrom P."/>
            <person name="Fagiolini M."/>
            <person name="Faulkner G."/>
            <person name="Fletcher C.F."/>
            <person name="Fukushima T."/>
            <person name="Furuno M."/>
            <person name="Futaki S."/>
            <person name="Gariboldi M."/>
            <person name="Georgii-Hemming P."/>
            <person name="Gingeras T.R."/>
            <person name="Gojobori T."/>
            <person name="Green R.E."/>
            <person name="Gustincich S."/>
            <person name="Harbers M."/>
            <person name="Hayashi Y."/>
            <person name="Hensch T.K."/>
            <person name="Hirokawa N."/>
            <person name="Hill D."/>
            <person name="Huminiecki L."/>
            <person name="Iacono M."/>
            <person name="Ikeo K."/>
            <person name="Iwama A."/>
            <person name="Ishikawa T."/>
            <person name="Jakt M."/>
            <person name="Kanapin A."/>
            <person name="Katoh M."/>
            <person name="Kawasawa Y."/>
            <person name="Kelso J."/>
            <person name="Kitamura H."/>
            <person name="Kitano H."/>
            <person name="Kollias G."/>
            <person name="Krishnan S.P."/>
            <person name="Kruger A."/>
            <person name="Kummerfeld S.K."/>
            <person name="Kurochkin I.V."/>
            <person name="Lareau L.F."/>
            <person name="Lazarevic D."/>
            <person name="Lipovich L."/>
            <person name="Liu J."/>
            <person name="Liuni S."/>
            <person name="McWilliam S."/>
            <person name="Madan Babu M."/>
            <person name="Madera M."/>
            <person name="Marchionni L."/>
            <person name="Matsuda H."/>
            <person name="Matsuzawa S."/>
            <person name="Miki H."/>
            <person name="Mignone F."/>
            <person name="Miyake S."/>
            <person name="Morris K."/>
            <person name="Mottagui-Tabar S."/>
            <person name="Mulder N."/>
            <person name="Nakano N."/>
            <person name="Nakauchi H."/>
            <person name="Ng P."/>
            <person name="Nilsson R."/>
            <person name="Nishiguchi S."/>
            <person name="Nishikawa S."/>
            <person name="Nori F."/>
            <person name="Ohara O."/>
            <person name="Okazaki Y."/>
            <person name="Orlando V."/>
            <person name="Pang K.C."/>
            <person name="Pavan W.J."/>
            <person name="Pavesi G."/>
            <person name="Pesole G."/>
            <person name="Petrovsky N."/>
            <person name="Piazza S."/>
            <person name="Reed J."/>
            <person name="Reid J.F."/>
            <person name="Ring B.Z."/>
            <person name="Ringwald M."/>
            <person name="Rost B."/>
            <person name="Ruan Y."/>
            <person name="Salzberg S.L."/>
            <person name="Sandelin A."/>
            <person name="Schneider C."/>
            <person name="Schoenbach C."/>
            <person name="Sekiguchi K."/>
            <person name="Semple C.A."/>
            <person name="Seno S."/>
            <person name="Sessa L."/>
            <person name="Sheng Y."/>
            <person name="Shibata Y."/>
            <person name="Shimada H."/>
            <person name="Shimada K."/>
            <person name="Silva D."/>
            <person name="Sinclair B."/>
            <person name="Sperling S."/>
            <person name="Stupka E."/>
            <person name="Sugiura K."/>
            <person name="Sultana R."/>
            <person name="Takenaka Y."/>
            <person name="Taki K."/>
            <person name="Tammoja K."/>
            <person name="Tan S.L."/>
            <person name="Tang S."/>
            <person name="Taylor M.S."/>
            <person name="Tegner J."/>
            <person name="Teichmann S.A."/>
            <person name="Ueda H.R."/>
            <person name="van Nimwegen E."/>
            <person name="Verardo R."/>
            <person name="Wei C.L."/>
            <person name="Yagi K."/>
            <person name="Yamanishi H."/>
            <person name="Zabarovsky E."/>
            <person name="Zhu S."/>
            <person name="Zimmer A."/>
            <person name="Hide W."/>
            <person name="Bult C."/>
            <person name="Grimmond S.M."/>
            <person name="Teasdale R.D."/>
            <person name="Liu E.T."/>
            <person name="Brusic V."/>
            <person name="Quackenbush J."/>
            <person name="Wahlestedt C."/>
            <person name="Mattick J.S."/>
            <person name="Hume D.A."/>
            <person name="Kai C."/>
            <person name="Sasaki D."/>
            <person name="Tomaru Y."/>
            <person name="Fukuda S."/>
            <person name="Kanamori-Katayama M."/>
            <person name="Suzuki M."/>
            <person name="Aoki J."/>
            <person name="Arakawa T."/>
            <person name="Iida J."/>
            <person name="Imamura K."/>
            <person name="Itoh M."/>
            <person name="Kato T."/>
            <person name="Kawaji H."/>
            <person name="Kawagashira N."/>
            <person name="Kawashima T."/>
            <person name="Kojima M."/>
            <person name="Kondo S."/>
            <person name="Konno H."/>
            <person name="Nakano K."/>
            <person name="Ninomiya N."/>
            <person name="Nishio T."/>
            <person name="Okada M."/>
            <person name="Plessy C."/>
            <person name="Shibata K."/>
            <person name="Shiraki T."/>
            <person name="Suzuki S."/>
            <person name="Tagami M."/>
            <person name="Waki K."/>
            <person name="Watahiki A."/>
            <person name="Okamura-Oho Y."/>
            <person name="Suzuki H."/>
            <person name="Kawai J."/>
            <person name="Hayashizaki Y."/>
        </authorList>
    </citation>
    <scope>NUCLEOTIDE SEQUENCE [LARGE SCALE MRNA]</scope>
    <source>
        <strain>C57BL/6J</strain>
        <tissue>Kidney</tissue>
    </source>
</reference>
<reference key="2">
    <citation type="journal article" date="2009" name="PLoS Biol.">
        <title>Lineage-specific biology revealed by a finished genome assembly of the mouse.</title>
        <authorList>
            <person name="Church D.M."/>
            <person name="Goodstadt L."/>
            <person name="Hillier L.W."/>
            <person name="Zody M.C."/>
            <person name="Goldstein S."/>
            <person name="She X."/>
            <person name="Bult C.J."/>
            <person name="Agarwala R."/>
            <person name="Cherry J.L."/>
            <person name="DiCuccio M."/>
            <person name="Hlavina W."/>
            <person name="Kapustin Y."/>
            <person name="Meric P."/>
            <person name="Maglott D."/>
            <person name="Birtle Z."/>
            <person name="Marques A.C."/>
            <person name="Graves T."/>
            <person name="Zhou S."/>
            <person name="Teague B."/>
            <person name="Potamousis K."/>
            <person name="Churas C."/>
            <person name="Place M."/>
            <person name="Herschleb J."/>
            <person name="Runnheim R."/>
            <person name="Forrest D."/>
            <person name="Amos-Landgraf J."/>
            <person name="Schwartz D.C."/>
            <person name="Cheng Z."/>
            <person name="Lindblad-Toh K."/>
            <person name="Eichler E.E."/>
            <person name="Ponting C.P."/>
        </authorList>
    </citation>
    <scope>NUCLEOTIDE SEQUENCE [LARGE SCALE GENOMIC DNA]</scope>
    <source>
        <strain>C57BL/6J</strain>
    </source>
</reference>
<reference key="3">
    <citation type="journal article" date="2004" name="Genome Res.">
        <title>The status, quality, and expansion of the NIH full-length cDNA project: the Mammalian Gene Collection (MGC).</title>
        <authorList>
            <consortium name="The MGC Project Team"/>
        </authorList>
    </citation>
    <scope>NUCLEOTIDE SEQUENCE [LARGE SCALE MRNA]</scope>
    <source>
        <tissue>Bone</tissue>
    </source>
</reference>
<reference key="4">
    <citation type="journal article" date="2010" name="Cell">
        <title>A tissue-specific atlas of mouse protein phosphorylation and expression.</title>
        <authorList>
            <person name="Huttlin E.L."/>
            <person name="Jedrychowski M.P."/>
            <person name="Elias J.E."/>
            <person name="Goswami T."/>
            <person name="Rad R."/>
            <person name="Beausoleil S.A."/>
            <person name="Villen J."/>
            <person name="Haas W."/>
            <person name="Sowa M.E."/>
            <person name="Gygi S.P."/>
        </authorList>
    </citation>
    <scope>IDENTIFICATION BY MASS SPECTROMETRY [LARGE SCALE ANALYSIS]</scope>
    <source>
        <tissue>Kidney</tissue>
    </source>
</reference>
<comment type="function">
    <text evidence="1">N4-methylcytidine (m4C) methyltransferase responsible for the methylation of position C839 in mitochondrial 12S rRNA. Involved in the stabilization of 12S rRNA folding, therefore facilitating the assembly of the mitochondrial small ribosomal subunits.</text>
</comment>
<comment type="catalytic activity">
    <reaction evidence="1">
        <text>cytidine(839) in 12S rRNA + S-adenosyl-L-methionine = N(4)-methylcytidine(839) in 12S rRNA + S-adenosyl-L-homocysteine + H(+)</text>
        <dbReference type="Rhea" id="RHEA:62524"/>
        <dbReference type="Rhea" id="RHEA-COMP:16109"/>
        <dbReference type="Rhea" id="RHEA-COMP:16110"/>
        <dbReference type="ChEBI" id="CHEBI:15378"/>
        <dbReference type="ChEBI" id="CHEBI:57856"/>
        <dbReference type="ChEBI" id="CHEBI:59789"/>
        <dbReference type="ChEBI" id="CHEBI:74506"/>
        <dbReference type="ChEBI" id="CHEBI:82748"/>
    </reaction>
    <physiologicalReaction direction="left-to-right" evidence="1">
        <dbReference type="Rhea" id="RHEA:62525"/>
    </physiologicalReaction>
</comment>
<comment type="subcellular location">
    <subcellularLocation>
        <location evidence="1">Mitochondrion matrix</location>
    </subcellularLocation>
</comment>
<comment type="similarity">
    <text evidence="4">Belongs to the methyltransferase superfamily. RsmH family.</text>
</comment>
<keyword id="KW-0002">3D-structure</keyword>
<keyword id="KW-0489">Methyltransferase</keyword>
<keyword id="KW-0496">Mitochondrion</keyword>
<keyword id="KW-0597">Phosphoprotein</keyword>
<keyword id="KW-1185">Reference proteome</keyword>
<keyword id="KW-0949">S-adenosyl-L-methionine</keyword>
<keyword id="KW-0808">Transferase</keyword>
<keyword id="KW-0809">Transit peptide</keyword>